<name>RSMA_ECOLU</name>
<gene>
    <name evidence="1" type="primary">rsmA</name>
    <name evidence="1" type="synonym">ksgA</name>
    <name type="ordered locus">ECUMN_0053</name>
</gene>
<feature type="chain" id="PRO_1000130274" description="Ribosomal RNA small subunit methyltransferase A">
    <location>
        <begin position="1"/>
        <end position="273"/>
    </location>
</feature>
<feature type="binding site" evidence="1">
    <location>
        <position position="18"/>
    </location>
    <ligand>
        <name>S-adenosyl-L-methionine</name>
        <dbReference type="ChEBI" id="CHEBI:59789"/>
    </ligand>
</feature>
<feature type="binding site" evidence="1">
    <location>
        <position position="20"/>
    </location>
    <ligand>
        <name>S-adenosyl-L-methionine</name>
        <dbReference type="ChEBI" id="CHEBI:59789"/>
    </ligand>
</feature>
<feature type="binding site" evidence="1">
    <location>
        <position position="45"/>
    </location>
    <ligand>
        <name>S-adenosyl-L-methionine</name>
        <dbReference type="ChEBI" id="CHEBI:59789"/>
    </ligand>
</feature>
<feature type="binding site" evidence="1">
    <location>
        <position position="66"/>
    </location>
    <ligand>
        <name>S-adenosyl-L-methionine</name>
        <dbReference type="ChEBI" id="CHEBI:59789"/>
    </ligand>
</feature>
<feature type="binding site" evidence="1">
    <location>
        <position position="91"/>
    </location>
    <ligand>
        <name>S-adenosyl-L-methionine</name>
        <dbReference type="ChEBI" id="CHEBI:59789"/>
    </ligand>
</feature>
<feature type="binding site" evidence="1">
    <location>
        <position position="113"/>
    </location>
    <ligand>
        <name>S-adenosyl-L-methionine</name>
        <dbReference type="ChEBI" id="CHEBI:59789"/>
    </ligand>
</feature>
<organism>
    <name type="scientific">Escherichia coli O17:K52:H18 (strain UMN026 / ExPEC)</name>
    <dbReference type="NCBI Taxonomy" id="585056"/>
    <lineage>
        <taxon>Bacteria</taxon>
        <taxon>Pseudomonadati</taxon>
        <taxon>Pseudomonadota</taxon>
        <taxon>Gammaproteobacteria</taxon>
        <taxon>Enterobacterales</taxon>
        <taxon>Enterobacteriaceae</taxon>
        <taxon>Escherichia</taxon>
    </lineage>
</organism>
<proteinExistence type="inferred from homology"/>
<comment type="function">
    <text evidence="1">Specifically dimethylates two adjacent adenosines (A1518 and A1519) in the loop of a conserved hairpin near the 3'-end of 16S rRNA in the 30S particle. May play a critical role in biogenesis of 30S subunits.</text>
</comment>
<comment type="catalytic activity">
    <reaction evidence="1">
        <text>adenosine(1518)/adenosine(1519) in 16S rRNA + 4 S-adenosyl-L-methionine = N(6)-dimethyladenosine(1518)/N(6)-dimethyladenosine(1519) in 16S rRNA + 4 S-adenosyl-L-homocysteine + 4 H(+)</text>
        <dbReference type="Rhea" id="RHEA:19609"/>
        <dbReference type="Rhea" id="RHEA-COMP:10232"/>
        <dbReference type="Rhea" id="RHEA-COMP:10233"/>
        <dbReference type="ChEBI" id="CHEBI:15378"/>
        <dbReference type="ChEBI" id="CHEBI:57856"/>
        <dbReference type="ChEBI" id="CHEBI:59789"/>
        <dbReference type="ChEBI" id="CHEBI:74411"/>
        <dbReference type="ChEBI" id="CHEBI:74493"/>
        <dbReference type="EC" id="2.1.1.182"/>
    </reaction>
</comment>
<comment type="subcellular location">
    <subcellularLocation>
        <location evidence="1">Cytoplasm</location>
    </subcellularLocation>
</comment>
<comment type="similarity">
    <text evidence="1">Belongs to the class I-like SAM-binding methyltransferase superfamily. rRNA adenine N(6)-methyltransferase family. RsmA subfamily.</text>
</comment>
<reference key="1">
    <citation type="journal article" date="2009" name="PLoS Genet.">
        <title>Organised genome dynamics in the Escherichia coli species results in highly diverse adaptive paths.</title>
        <authorList>
            <person name="Touchon M."/>
            <person name="Hoede C."/>
            <person name="Tenaillon O."/>
            <person name="Barbe V."/>
            <person name="Baeriswyl S."/>
            <person name="Bidet P."/>
            <person name="Bingen E."/>
            <person name="Bonacorsi S."/>
            <person name="Bouchier C."/>
            <person name="Bouvet O."/>
            <person name="Calteau A."/>
            <person name="Chiapello H."/>
            <person name="Clermont O."/>
            <person name="Cruveiller S."/>
            <person name="Danchin A."/>
            <person name="Diard M."/>
            <person name="Dossat C."/>
            <person name="Karoui M.E."/>
            <person name="Frapy E."/>
            <person name="Garry L."/>
            <person name="Ghigo J.M."/>
            <person name="Gilles A.M."/>
            <person name="Johnson J."/>
            <person name="Le Bouguenec C."/>
            <person name="Lescat M."/>
            <person name="Mangenot S."/>
            <person name="Martinez-Jehanne V."/>
            <person name="Matic I."/>
            <person name="Nassif X."/>
            <person name="Oztas S."/>
            <person name="Petit M.A."/>
            <person name="Pichon C."/>
            <person name="Rouy Z."/>
            <person name="Ruf C.S."/>
            <person name="Schneider D."/>
            <person name="Tourret J."/>
            <person name="Vacherie B."/>
            <person name="Vallenet D."/>
            <person name="Medigue C."/>
            <person name="Rocha E.P.C."/>
            <person name="Denamur E."/>
        </authorList>
    </citation>
    <scope>NUCLEOTIDE SEQUENCE [LARGE SCALE GENOMIC DNA]</scope>
    <source>
        <strain>UMN026 / ExPEC</strain>
    </source>
</reference>
<evidence type="ECO:0000255" key="1">
    <source>
        <dbReference type="HAMAP-Rule" id="MF_00607"/>
    </source>
</evidence>
<accession>B7N7S6</accession>
<sequence>MNNRVHQGHLARKRFGQNFLNDQFVIDSIVSAINPQKGQAMVEIGPGLAALTEPVGERLDKLTVIELDRDLAARLQTHPFLGPKLTIYQQDAMTFNFGELAEKMGQPLRVFGNLPYNISTPLMFHLFSYTDAIADMHFMLQKEVVNRLVAGPNSKAYGRLSVMAQYYCNVIPVLEVPPSAFTPPPKVDSAVVRLVPHATMPHPVKDVRVLSRITTEAFNQRRKTIRNSLGNLFSVEVLTGMGIDPAMRAENISVAQYCQMANYLAENALLQES</sequence>
<dbReference type="EC" id="2.1.1.182" evidence="1"/>
<dbReference type="EMBL" id="CU928163">
    <property type="protein sequence ID" value="CAR11276.1"/>
    <property type="molecule type" value="Genomic_DNA"/>
</dbReference>
<dbReference type="RefSeq" id="WP_001065360.1">
    <property type="nucleotide sequence ID" value="NC_011751.1"/>
</dbReference>
<dbReference type="RefSeq" id="YP_002410831.1">
    <property type="nucleotide sequence ID" value="NC_011751.1"/>
</dbReference>
<dbReference type="SMR" id="B7N7S6"/>
<dbReference type="STRING" id="585056.ECUMN_0053"/>
<dbReference type="KEGG" id="eum:ECUMN_0053"/>
<dbReference type="PATRIC" id="fig|585056.7.peg.240"/>
<dbReference type="HOGENOM" id="CLU_041220_0_1_6"/>
<dbReference type="Proteomes" id="UP000007097">
    <property type="component" value="Chromosome"/>
</dbReference>
<dbReference type="GO" id="GO:0005829">
    <property type="term" value="C:cytosol"/>
    <property type="evidence" value="ECO:0007669"/>
    <property type="project" value="TreeGrafter"/>
</dbReference>
<dbReference type="GO" id="GO:0052908">
    <property type="term" value="F:16S rRNA (adenine(1518)-N(6)/adenine(1519)-N(6))-dimethyltransferase activity"/>
    <property type="evidence" value="ECO:0007669"/>
    <property type="project" value="UniProtKB-EC"/>
</dbReference>
<dbReference type="GO" id="GO:0003723">
    <property type="term" value="F:RNA binding"/>
    <property type="evidence" value="ECO:0007669"/>
    <property type="project" value="UniProtKB-KW"/>
</dbReference>
<dbReference type="FunFam" id="1.10.8.100:FF:000001">
    <property type="entry name" value="Ribosomal RNA small subunit methyltransferase A"/>
    <property type="match status" value="1"/>
</dbReference>
<dbReference type="FunFam" id="3.40.50.150:FF:000006">
    <property type="entry name" value="Ribosomal RNA small subunit methyltransferase A"/>
    <property type="match status" value="1"/>
</dbReference>
<dbReference type="Gene3D" id="1.10.8.100">
    <property type="entry name" value="Ribosomal RNA adenine dimethylase-like, domain 2"/>
    <property type="match status" value="1"/>
</dbReference>
<dbReference type="Gene3D" id="3.40.50.150">
    <property type="entry name" value="Vaccinia Virus protein VP39"/>
    <property type="match status" value="1"/>
</dbReference>
<dbReference type="HAMAP" id="MF_00607">
    <property type="entry name" value="16SrRNA_methyltr_A"/>
    <property type="match status" value="1"/>
</dbReference>
<dbReference type="InterPro" id="IPR001737">
    <property type="entry name" value="KsgA/Erm"/>
</dbReference>
<dbReference type="InterPro" id="IPR023165">
    <property type="entry name" value="rRNA_Ade_diMease-like_C"/>
</dbReference>
<dbReference type="InterPro" id="IPR020596">
    <property type="entry name" value="rRNA_Ade_Mease_Trfase_CS"/>
</dbReference>
<dbReference type="InterPro" id="IPR020598">
    <property type="entry name" value="rRNA_Ade_methylase_Trfase_N"/>
</dbReference>
<dbReference type="InterPro" id="IPR011530">
    <property type="entry name" value="rRNA_adenine_dimethylase"/>
</dbReference>
<dbReference type="InterPro" id="IPR029063">
    <property type="entry name" value="SAM-dependent_MTases_sf"/>
</dbReference>
<dbReference type="NCBIfam" id="TIGR00755">
    <property type="entry name" value="ksgA"/>
    <property type="match status" value="1"/>
</dbReference>
<dbReference type="PANTHER" id="PTHR11727">
    <property type="entry name" value="DIMETHYLADENOSINE TRANSFERASE"/>
    <property type="match status" value="1"/>
</dbReference>
<dbReference type="PANTHER" id="PTHR11727:SF7">
    <property type="entry name" value="DIMETHYLADENOSINE TRANSFERASE-RELATED"/>
    <property type="match status" value="1"/>
</dbReference>
<dbReference type="Pfam" id="PF00398">
    <property type="entry name" value="RrnaAD"/>
    <property type="match status" value="1"/>
</dbReference>
<dbReference type="SMART" id="SM00650">
    <property type="entry name" value="rADc"/>
    <property type="match status" value="1"/>
</dbReference>
<dbReference type="SUPFAM" id="SSF53335">
    <property type="entry name" value="S-adenosyl-L-methionine-dependent methyltransferases"/>
    <property type="match status" value="1"/>
</dbReference>
<dbReference type="PROSITE" id="PS01131">
    <property type="entry name" value="RRNA_A_DIMETH"/>
    <property type="match status" value="1"/>
</dbReference>
<dbReference type="PROSITE" id="PS51689">
    <property type="entry name" value="SAM_RNA_A_N6_MT"/>
    <property type="match status" value="1"/>
</dbReference>
<protein>
    <recommendedName>
        <fullName evidence="1">Ribosomal RNA small subunit methyltransferase A</fullName>
        <ecNumber evidence="1">2.1.1.182</ecNumber>
    </recommendedName>
    <alternativeName>
        <fullName evidence="1">16S rRNA (adenine(1518)-N(6)/adenine(1519)-N(6))-dimethyltransferase</fullName>
    </alternativeName>
    <alternativeName>
        <fullName evidence="1">16S rRNA dimethyladenosine transferase</fullName>
    </alternativeName>
    <alternativeName>
        <fullName evidence="1">16S rRNA dimethylase</fullName>
    </alternativeName>
    <alternativeName>
        <fullName evidence="1">S-adenosylmethionine-6-N', N'-adenosyl(rRNA) dimethyltransferase</fullName>
    </alternativeName>
</protein>
<keyword id="KW-0963">Cytoplasm</keyword>
<keyword id="KW-0489">Methyltransferase</keyword>
<keyword id="KW-0694">RNA-binding</keyword>
<keyword id="KW-0698">rRNA processing</keyword>
<keyword id="KW-0949">S-adenosyl-L-methionine</keyword>
<keyword id="KW-0808">Transferase</keyword>